<organism>
    <name type="scientific">Caenorhabditis elegans</name>
    <dbReference type="NCBI Taxonomy" id="6239"/>
    <lineage>
        <taxon>Eukaryota</taxon>
        <taxon>Metazoa</taxon>
        <taxon>Ecdysozoa</taxon>
        <taxon>Nematoda</taxon>
        <taxon>Chromadorea</taxon>
        <taxon>Rhabditida</taxon>
        <taxon>Rhabditina</taxon>
        <taxon>Rhabditomorpha</taxon>
        <taxon>Rhabditoidea</taxon>
        <taxon>Rhabditidae</taxon>
        <taxon>Peloderinae</taxon>
        <taxon>Caenorhabditis</taxon>
    </lineage>
</organism>
<accession>Q17688</accession>
<dbReference type="EMBL" id="BX284604">
    <property type="protein sequence ID" value="CCD63307.1"/>
    <property type="molecule type" value="Genomic_DNA"/>
</dbReference>
<dbReference type="PIR" id="T29269">
    <property type="entry name" value="T29269"/>
</dbReference>
<dbReference type="RefSeq" id="NP_501303.1">
    <property type="nucleotide sequence ID" value="NM_068902.8"/>
</dbReference>
<dbReference type="SMR" id="Q17688"/>
<dbReference type="BioGRID" id="42689">
    <property type="interactions" value="3"/>
</dbReference>
<dbReference type="DIP" id="DIP-25109N"/>
<dbReference type="FunCoup" id="Q17688">
    <property type="interactions" value="19"/>
</dbReference>
<dbReference type="STRING" id="6239.C06A6.5.1"/>
<dbReference type="GlyCosmos" id="Q17688">
    <property type="glycosylation" value="1 site, No reported glycans"/>
</dbReference>
<dbReference type="iPTMnet" id="Q17688"/>
<dbReference type="PaxDb" id="6239-C06A6.5"/>
<dbReference type="PeptideAtlas" id="Q17688"/>
<dbReference type="EnsemblMetazoa" id="C06A6.5.1">
    <property type="protein sequence ID" value="C06A6.5.1"/>
    <property type="gene ID" value="WBGene00015510"/>
</dbReference>
<dbReference type="GeneID" id="177572"/>
<dbReference type="KEGG" id="cel:CELE_C06A6.5"/>
<dbReference type="UCSC" id="C06A6.5">
    <property type="organism name" value="c. elegans"/>
</dbReference>
<dbReference type="AGR" id="WB:WBGene00015510"/>
<dbReference type="CTD" id="177572"/>
<dbReference type="WormBase" id="C06A6.5">
    <property type="protein sequence ID" value="CE27661"/>
    <property type="gene ID" value="WBGene00015510"/>
    <property type="gene designation" value="erp-44.2"/>
</dbReference>
<dbReference type="eggNOG" id="KOG0912">
    <property type="taxonomic scope" value="Eukaryota"/>
</dbReference>
<dbReference type="HOGENOM" id="CLU_054449_1_0_1"/>
<dbReference type="InParanoid" id="Q17688"/>
<dbReference type="OMA" id="QHMYLFP"/>
<dbReference type="OrthoDB" id="294696at2759"/>
<dbReference type="PhylomeDB" id="Q17688"/>
<dbReference type="PRO" id="PR:Q17688"/>
<dbReference type="Proteomes" id="UP000001940">
    <property type="component" value="Chromosome IV"/>
</dbReference>
<dbReference type="Bgee" id="WBGene00015510">
    <property type="expression patterns" value="Expressed in pharyngeal muscle cell (C elegans) and 4 other cell types or tissues"/>
</dbReference>
<dbReference type="GO" id="GO:0005788">
    <property type="term" value="C:endoplasmic reticulum lumen"/>
    <property type="evidence" value="ECO:0007669"/>
    <property type="project" value="UniProtKB-SubCell"/>
</dbReference>
<dbReference type="GO" id="GO:0005789">
    <property type="term" value="C:endoplasmic reticulum membrane"/>
    <property type="evidence" value="ECO:0000318"/>
    <property type="project" value="GO_Central"/>
</dbReference>
<dbReference type="GO" id="GO:0005793">
    <property type="term" value="C:endoplasmic reticulum-Golgi intermediate compartment"/>
    <property type="evidence" value="ECO:0000318"/>
    <property type="project" value="GO_Central"/>
</dbReference>
<dbReference type="GO" id="GO:0003756">
    <property type="term" value="F:protein disulfide isomerase activity"/>
    <property type="evidence" value="ECO:0000318"/>
    <property type="project" value="GO_Central"/>
</dbReference>
<dbReference type="GO" id="GO:0006457">
    <property type="term" value="P:protein folding"/>
    <property type="evidence" value="ECO:0000318"/>
    <property type="project" value="GO_Central"/>
</dbReference>
<dbReference type="CDD" id="cd02996">
    <property type="entry name" value="PDI_a_ERp44"/>
    <property type="match status" value="1"/>
</dbReference>
<dbReference type="CDD" id="cd03072">
    <property type="entry name" value="PDI_b'_ERp44"/>
    <property type="match status" value="1"/>
</dbReference>
<dbReference type="CDD" id="cd03070">
    <property type="entry name" value="PDI_b_ERp44"/>
    <property type="match status" value="1"/>
</dbReference>
<dbReference type="Gene3D" id="3.40.30.10">
    <property type="entry name" value="Glutaredoxin"/>
    <property type="match status" value="3"/>
</dbReference>
<dbReference type="InterPro" id="IPR052643">
    <property type="entry name" value="ERP44"/>
</dbReference>
<dbReference type="InterPro" id="IPR041862">
    <property type="entry name" value="ERp44_PDI_b"/>
</dbReference>
<dbReference type="InterPro" id="IPR041870">
    <property type="entry name" value="ERp44_PDI_b"/>
</dbReference>
<dbReference type="InterPro" id="IPR036249">
    <property type="entry name" value="Thioredoxin-like_sf"/>
</dbReference>
<dbReference type="InterPro" id="IPR013766">
    <property type="entry name" value="Thioredoxin_domain"/>
</dbReference>
<dbReference type="PANTHER" id="PTHR46295">
    <property type="entry name" value="ENDOPLASMIC RETICULUM RESIDENT PROTEIN 44"/>
    <property type="match status" value="1"/>
</dbReference>
<dbReference type="PANTHER" id="PTHR46295:SF4">
    <property type="entry name" value="ENDOPLASMIC RETICULUM RESIDENT PROTEIN 44.2"/>
    <property type="match status" value="1"/>
</dbReference>
<dbReference type="Pfam" id="PF00085">
    <property type="entry name" value="Thioredoxin"/>
    <property type="match status" value="1"/>
</dbReference>
<dbReference type="Pfam" id="PF13848">
    <property type="entry name" value="Thioredoxin_6"/>
    <property type="match status" value="1"/>
</dbReference>
<dbReference type="SUPFAM" id="SSF52833">
    <property type="entry name" value="Thioredoxin-like"/>
    <property type="match status" value="3"/>
</dbReference>
<dbReference type="PROSITE" id="PS51352">
    <property type="entry name" value="THIOREDOXIN_2"/>
    <property type="match status" value="1"/>
</dbReference>
<reference key="1">
    <citation type="journal article" date="1998" name="Science">
        <title>Genome sequence of the nematode C. elegans: a platform for investigating biology.</title>
        <authorList>
            <consortium name="The C. elegans sequencing consortium"/>
        </authorList>
    </citation>
    <scope>NUCLEOTIDE SEQUENCE [LARGE SCALE GENOMIC DNA]</scope>
    <source>
        <strain>Bristol N2</strain>
    </source>
</reference>
<reference key="2">
    <citation type="journal article" date="2003" name="Nat. Biotechnol.">
        <title>Lectin affinity capture, isotope-coded tagging and mass spectrometry to identify N-linked glycoproteins.</title>
        <authorList>
            <person name="Kaji H."/>
            <person name="Saito H."/>
            <person name="Yamauchi Y."/>
            <person name="Shinkawa T."/>
            <person name="Taoka M."/>
            <person name="Hirabayashi J."/>
            <person name="Kasai K."/>
            <person name="Takahashi N."/>
            <person name="Isobe T."/>
        </authorList>
    </citation>
    <scope>GLYCOSYLATION [LARGE SCALE ANALYSIS] AT ASN-264</scope>
    <scope>IDENTIFICATION BY MASS SPECTROMETRY</scope>
    <source>
        <strain>Bristol N2</strain>
    </source>
</reference>
<reference key="3">
    <citation type="journal article" date="2007" name="Mol. Cell. Proteomics">
        <title>Proteomics reveals N-linked glycoprotein diversity in Caenorhabditis elegans and suggests an atypical translocation mechanism for integral membrane proteins.</title>
        <authorList>
            <person name="Kaji H."/>
            <person name="Kamiie J."/>
            <person name="Kawakami H."/>
            <person name="Kido K."/>
            <person name="Yamauchi Y."/>
            <person name="Shinkawa T."/>
            <person name="Taoka M."/>
            <person name="Takahashi N."/>
            <person name="Isobe T."/>
        </authorList>
    </citation>
    <scope>GLYCOSYLATION [LARGE SCALE ANALYSIS] AT ASN-264</scope>
    <scope>IDENTIFICATION BY MASS SPECTROMETRY</scope>
    <source>
        <strain>Bristol N2</strain>
    </source>
</reference>
<name>ER442_CAEEL</name>
<gene>
    <name evidence="8" type="primary">erp-44.2</name>
    <name evidence="8" type="ORF">C06A6.5</name>
</gene>
<comment type="subcellular location">
    <subcellularLocation>
        <location evidence="1">Endoplasmic reticulum lumen</location>
    </subcellularLocation>
</comment>
<comment type="domain">
    <text>The thioredoxin domain lacks the 2 redox-active Cys. This strongly suggests that it lacks thioredoxin activity.</text>
</comment>
<feature type="signal peptide" evidence="2">
    <location>
        <begin position="1"/>
        <end position="21"/>
    </location>
</feature>
<feature type="chain" id="PRO_0000250587" description="Endoplasmic reticulum resident protein 44.2">
    <location>
        <begin position="22"/>
        <end position="413"/>
    </location>
</feature>
<feature type="domain" description="Thioredoxin" evidence="3">
    <location>
        <begin position="22"/>
        <end position="136"/>
    </location>
</feature>
<feature type="region of interest" description="Disordered" evidence="4">
    <location>
        <begin position="367"/>
        <end position="413"/>
    </location>
</feature>
<feature type="short sequence motif" description="Prevents secretion from ER" evidence="7">
    <location>
        <begin position="410"/>
        <end position="413"/>
    </location>
</feature>
<feature type="compositionally biased region" description="Basic and acidic residues" evidence="4">
    <location>
        <begin position="396"/>
        <end position="413"/>
    </location>
</feature>
<feature type="glycosylation site" description="N-linked (GlcNAc...) asparagine" evidence="5 6">
    <location>
        <position position="264"/>
    </location>
</feature>
<feature type="disulfide bond" evidence="1">
    <location>
        <begin position="184"/>
        <end position="233"/>
    </location>
</feature>
<keyword id="KW-1015">Disulfide bond</keyword>
<keyword id="KW-0256">Endoplasmic reticulum</keyword>
<keyword id="KW-0325">Glycoprotein</keyword>
<keyword id="KW-1185">Reference proteome</keyword>
<keyword id="KW-0732">Signal</keyword>
<proteinExistence type="evidence at protein level"/>
<evidence type="ECO:0000250" key="1">
    <source>
        <dbReference type="UniProtKB" id="Q9BS26"/>
    </source>
</evidence>
<evidence type="ECO:0000255" key="2"/>
<evidence type="ECO:0000255" key="3">
    <source>
        <dbReference type="PROSITE-ProRule" id="PRU00691"/>
    </source>
</evidence>
<evidence type="ECO:0000256" key="4">
    <source>
        <dbReference type="SAM" id="MobiDB-lite"/>
    </source>
</evidence>
<evidence type="ECO:0000269" key="5">
    <source>
    </source>
</evidence>
<evidence type="ECO:0000269" key="6">
    <source>
    </source>
</evidence>
<evidence type="ECO:0000305" key="7"/>
<evidence type="ECO:0000312" key="8">
    <source>
        <dbReference type="WormBase" id="C06A6.5"/>
    </source>
</evidence>
<sequence>MNLASVLLLLAACHLSVSVNGQEHKEAIELSMANHDHVLGSAQVVFVAFCADWCPFSRRLKPIFEESARVFHQENPQASAVWAIVDSQRQADIGDKYFVNKYPTMKVFVNGELITKEYRSTRSVEALTNFVKFQLSTAINEFSSQDQLNQEMDKSKRNVVAWLKKDGPEFANLKKVASILREDCSFWVPTDHFGTQTNDNKLSFFDPDSNEEAKFTGNFNDYDFVKQWVTDKCIPLVREVTFENVEELTEEGMPFLIYFRDPDNKTTDKVFGEAVARELYDQRSAINPLLADGHKFAHPLKHLGKTKEDLPVLAIDSFQHMYLFPDMTQMNIPGKLREFVMDLHSGKLHKDFHENLDQRMIELAKAKAARGITDDHEAQAPSTRPIDTTPPPSVFKELKPSDKRYSILQKSEL</sequence>
<protein>
    <recommendedName>
        <fullName evidence="7">Endoplasmic reticulum resident protein 44.2</fullName>
    </recommendedName>
</protein>